<name>ORC1_ORYSJ</name>
<accession>Q5SMU7</accession>
<accession>Q0DDZ5</accession>
<accession>Q9MB44</accession>
<protein>
    <recommendedName>
        <fullName evidence="13">Origin of replication complex subunit 1</fullName>
        <shortName evidence="13">OsORC1</shortName>
    </recommendedName>
</protein>
<gene>
    <name evidence="13" type="primary">ORC1</name>
    <name evidence="16" type="ordered locus">Os06g0187000</name>
    <name evidence="14" type="ordered locus">LOC_Os06g08790</name>
    <name evidence="17" type="ORF">OsJ_20389</name>
    <name evidence="15" type="ORF">P0470C02.11</name>
</gene>
<dbReference type="EMBL" id="AB037135">
    <property type="protein sequence ID" value="BAA89785.2"/>
    <property type="status" value="ALT_FRAME"/>
    <property type="molecule type" value="mRNA"/>
</dbReference>
<dbReference type="EMBL" id="AP003508">
    <property type="protein sequence ID" value="BAD72454.1"/>
    <property type="molecule type" value="Genomic_DNA"/>
</dbReference>
<dbReference type="EMBL" id="AP008212">
    <property type="protein sequence ID" value="BAF18928.1"/>
    <property type="status" value="ALT_SEQ"/>
    <property type="molecule type" value="Genomic_DNA"/>
</dbReference>
<dbReference type="EMBL" id="AP014962">
    <property type="status" value="NOT_ANNOTATED_CDS"/>
    <property type="molecule type" value="Genomic_DNA"/>
</dbReference>
<dbReference type="EMBL" id="CM000143">
    <property type="protein sequence ID" value="EEE65230.1"/>
    <property type="molecule type" value="Genomic_DNA"/>
</dbReference>
<dbReference type="EMBL" id="AK103068">
    <property type="protein sequence ID" value="BAG95868.1"/>
    <property type="molecule type" value="mRNA"/>
</dbReference>
<dbReference type="RefSeq" id="XP_015641584.1">
    <property type="nucleotide sequence ID" value="XM_015786098.1"/>
</dbReference>
<dbReference type="SMR" id="Q5SMU7"/>
<dbReference type="FunCoup" id="Q5SMU7">
    <property type="interactions" value="46"/>
</dbReference>
<dbReference type="STRING" id="39947.Q5SMU7"/>
<dbReference type="PaxDb" id="39947-Q5SMU7"/>
<dbReference type="EnsemblPlants" id="Os06t0187000-01">
    <property type="protein sequence ID" value="Os06t0187000-01"/>
    <property type="gene ID" value="Os06g0187000"/>
</dbReference>
<dbReference type="Gramene" id="Os06t0187000-01">
    <property type="protein sequence ID" value="Os06t0187000-01"/>
    <property type="gene ID" value="Os06g0187000"/>
</dbReference>
<dbReference type="KEGG" id="dosa:Os06g0187000"/>
<dbReference type="InParanoid" id="Q5SMU7"/>
<dbReference type="OrthoDB" id="1926878at2759"/>
<dbReference type="PlantReactome" id="R-OSA-9640882">
    <property type="pathway name" value="Assembly of pre-replication complex"/>
</dbReference>
<dbReference type="PlantReactome" id="R-OSA-9645850">
    <property type="pathway name" value="Activation of pre-replication complex"/>
</dbReference>
<dbReference type="Proteomes" id="UP000000763">
    <property type="component" value="Chromosome 6"/>
</dbReference>
<dbReference type="Proteomes" id="UP000007752">
    <property type="component" value="Chromosome 6"/>
</dbReference>
<dbReference type="Proteomes" id="UP000059680">
    <property type="component" value="Chromosome 6"/>
</dbReference>
<dbReference type="GO" id="GO:0005664">
    <property type="term" value="C:nuclear origin of replication recognition complex"/>
    <property type="evidence" value="ECO:0000318"/>
    <property type="project" value="GO_Central"/>
</dbReference>
<dbReference type="GO" id="GO:0005634">
    <property type="term" value="C:nucleus"/>
    <property type="evidence" value="ECO:0000314"/>
    <property type="project" value="UniProtKB"/>
</dbReference>
<dbReference type="GO" id="GO:0005524">
    <property type="term" value="F:ATP binding"/>
    <property type="evidence" value="ECO:0007669"/>
    <property type="project" value="UniProtKB-KW"/>
</dbReference>
<dbReference type="GO" id="GO:0016887">
    <property type="term" value="F:ATP hydrolysis activity"/>
    <property type="evidence" value="ECO:0007669"/>
    <property type="project" value="InterPro"/>
</dbReference>
<dbReference type="GO" id="GO:0003682">
    <property type="term" value="F:chromatin binding"/>
    <property type="evidence" value="ECO:0007669"/>
    <property type="project" value="InterPro"/>
</dbReference>
<dbReference type="GO" id="GO:0003688">
    <property type="term" value="F:DNA replication origin binding"/>
    <property type="evidence" value="ECO:0000318"/>
    <property type="project" value="GO_Central"/>
</dbReference>
<dbReference type="GO" id="GO:0008270">
    <property type="term" value="F:zinc ion binding"/>
    <property type="evidence" value="ECO:0007669"/>
    <property type="project" value="UniProtKB-KW"/>
</dbReference>
<dbReference type="GO" id="GO:0006270">
    <property type="term" value="P:DNA replication initiation"/>
    <property type="evidence" value="ECO:0000318"/>
    <property type="project" value="GO_Central"/>
</dbReference>
<dbReference type="GO" id="GO:0033314">
    <property type="term" value="P:mitotic DNA replication checkpoint signaling"/>
    <property type="evidence" value="ECO:0000318"/>
    <property type="project" value="GO_Central"/>
</dbReference>
<dbReference type="GO" id="GO:0009744">
    <property type="term" value="P:response to sucrose"/>
    <property type="evidence" value="ECO:0000314"/>
    <property type="project" value="UniProtKB"/>
</dbReference>
<dbReference type="CDD" id="cd04718">
    <property type="entry name" value="BAH_plant_2"/>
    <property type="match status" value="1"/>
</dbReference>
<dbReference type="FunFam" id="1.10.8.60:FF:000082">
    <property type="entry name" value="Origin recognition complex subunit 1"/>
    <property type="match status" value="1"/>
</dbReference>
<dbReference type="FunFam" id="2.30.30.490:FF:000020">
    <property type="entry name" value="Origin recognition complex subunit 1"/>
    <property type="match status" value="1"/>
</dbReference>
<dbReference type="FunFam" id="3.30.40.10:FF:000532">
    <property type="entry name" value="Origin recognition complex subunit 1"/>
    <property type="match status" value="1"/>
</dbReference>
<dbReference type="FunFam" id="3.40.50.300:FF:000199">
    <property type="entry name" value="Origin recognition complex subunit 1"/>
    <property type="match status" value="1"/>
</dbReference>
<dbReference type="Gene3D" id="1.10.8.60">
    <property type="match status" value="1"/>
</dbReference>
<dbReference type="Gene3D" id="2.30.30.490">
    <property type="match status" value="1"/>
</dbReference>
<dbReference type="Gene3D" id="3.40.50.300">
    <property type="entry name" value="P-loop containing nucleotide triphosphate hydrolases"/>
    <property type="match status" value="1"/>
</dbReference>
<dbReference type="Gene3D" id="3.30.40.10">
    <property type="entry name" value="Zinc/RING finger domain, C3HC4 (zinc finger)"/>
    <property type="match status" value="1"/>
</dbReference>
<dbReference type="InterPro" id="IPR003593">
    <property type="entry name" value="AAA+_ATPase"/>
</dbReference>
<dbReference type="InterPro" id="IPR041083">
    <property type="entry name" value="AAA_lid_10"/>
</dbReference>
<dbReference type="InterPro" id="IPR003959">
    <property type="entry name" value="ATPase_AAA_core"/>
</dbReference>
<dbReference type="InterPro" id="IPR001025">
    <property type="entry name" value="BAH_dom"/>
</dbReference>
<dbReference type="InterPro" id="IPR043151">
    <property type="entry name" value="BAH_sf"/>
</dbReference>
<dbReference type="InterPro" id="IPR015163">
    <property type="entry name" value="Cdc6_C"/>
</dbReference>
<dbReference type="InterPro" id="IPR050311">
    <property type="entry name" value="ORC1/CDC6"/>
</dbReference>
<dbReference type="InterPro" id="IPR027417">
    <property type="entry name" value="P-loop_NTPase"/>
</dbReference>
<dbReference type="InterPro" id="IPR019786">
    <property type="entry name" value="Zinc_finger_PHD-type_CS"/>
</dbReference>
<dbReference type="InterPro" id="IPR011011">
    <property type="entry name" value="Znf_FYVE_PHD"/>
</dbReference>
<dbReference type="InterPro" id="IPR001965">
    <property type="entry name" value="Znf_PHD"/>
</dbReference>
<dbReference type="InterPro" id="IPR019787">
    <property type="entry name" value="Znf_PHD-finger"/>
</dbReference>
<dbReference type="InterPro" id="IPR013083">
    <property type="entry name" value="Znf_RING/FYVE/PHD"/>
</dbReference>
<dbReference type="PANTHER" id="PTHR10763">
    <property type="entry name" value="CELL DIVISION CONTROL PROTEIN 6-RELATED"/>
    <property type="match status" value="1"/>
</dbReference>
<dbReference type="PANTHER" id="PTHR10763:SF23">
    <property type="entry name" value="ORIGIN RECOGNITION COMPLEX SUBUNIT 1"/>
    <property type="match status" value="1"/>
</dbReference>
<dbReference type="Pfam" id="PF00004">
    <property type="entry name" value="AAA"/>
    <property type="match status" value="1"/>
</dbReference>
<dbReference type="Pfam" id="PF17872">
    <property type="entry name" value="AAA_lid_10"/>
    <property type="match status" value="1"/>
</dbReference>
<dbReference type="Pfam" id="PF01426">
    <property type="entry name" value="BAH"/>
    <property type="match status" value="1"/>
</dbReference>
<dbReference type="Pfam" id="PF09079">
    <property type="entry name" value="Cdc6_C"/>
    <property type="match status" value="1"/>
</dbReference>
<dbReference type="Pfam" id="PF00628">
    <property type="entry name" value="PHD"/>
    <property type="match status" value="1"/>
</dbReference>
<dbReference type="SMART" id="SM00382">
    <property type="entry name" value="AAA"/>
    <property type="match status" value="1"/>
</dbReference>
<dbReference type="SMART" id="SM00439">
    <property type="entry name" value="BAH"/>
    <property type="match status" value="1"/>
</dbReference>
<dbReference type="SMART" id="SM00249">
    <property type="entry name" value="PHD"/>
    <property type="match status" value="1"/>
</dbReference>
<dbReference type="SUPFAM" id="SSF57903">
    <property type="entry name" value="FYVE/PHD zinc finger"/>
    <property type="match status" value="1"/>
</dbReference>
<dbReference type="SUPFAM" id="SSF52540">
    <property type="entry name" value="P-loop containing nucleoside triphosphate hydrolases"/>
    <property type="match status" value="1"/>
</dbReference>
<dbReference type="PROSITE" id="PS51038">
    <property type="entry name" value="BAH"/>
    <property type="match status" value="1"/>
</dbReference>
<dbReference type="PROSITE" id="PS01359">
    <property type="entry name" value="ZF_PHD_1"/>
    <property type="match status" value="1"/>
</dbReference>
<dbReference type="PROSITE" id="PS50016">
    <property type="entry name" value="ZF_PHD_2"/>
    <property type="match status" value="1"/>
</dbReference>
<keyword id="KW-0010">Activator</keyword>
<keyword id="KW-0067">ATP-binding</keyword>
<keyword id="KW-0235">DNA replication</keyword>
<keyword id="KW-0238">DNA-binding</keyword>
<keyword id="KW-0460">Magnesium</keyword>
<keyword id="KW-0479">Metal-binding</keyword>
<keyword id="KW-0547">Nucleotide-binding</keyword>
<keyword id="KW-0539">Nucleus</keyword>
<keyword id="KW-1185">Reference proteome</keyword>
<keyword id="KW-0804">Transcription</keyword>
<keyword id="KW-0805">Transcription regulation</keyword>
<keyword id="KW-0862">Zinc</keyword>
<keyword id="KW-0863">Zinc-finger</keyword>
<feature type="chain" id="PRO_0000431428" description="Origin of replication complex subunit 1">
    <location>
        <begin position="1"/>
        <end position="814"/>
    </location>
</feature>
<feature type="domain" description="BAH" evidence="7">
    <location>
        <begin position="218"/>
        <end position="335"/>
    </location>
</feature>
<feature type="zinc finger region" description="PHD-type" evidence="6">
    <location>
        <begin position="160"/>
        <end position="209"/>
    </location>
</feature>
<feature type="region of interest" description="Disordered" evidence="9">
    <location>
        <begin position="1"/>
        <end position="127"/>
    </location>
</feature>
<feature type="region of interest" description="Histone H3 binding" evidence="4">
    <location>
        <begin position="157"/>
        <end position="181"/>
    </location>
</feature>
<feature type="region of interest" description="Histone H3 binding" evidence="4">
    <location>
        <begin position="197"/>
        <end position="201"/>
    </location>
</feature>
<feature type="region of interest" description="Histone H3 binding" evidence="4">
    <location>
        <begin position="310"/>
        <end position="315"/>
    </location>
</feature>
<feature type="region of interest" description="Disordered" evidence="9">
    <location>
        <begin position="339"/>
        <end position="384"/>
    </location>
</feature>
<feature type="region of interest" description="Necessary and sufficient for ORC complex assembly" evidence="2">
    <location>
        <begin position="433"/>
        <end position="804"/>
    </location>
</feature>
<feature type="short sequence motif" description="Nuclear localization signal" evidence="8">
    <location>
        <begin position="105"/>
        <end position="112"/>
    </location>
</feature>
<feature type="compositionally biased region" description="Polar residues" evidence="9">
    <location>
        <begin position="1"/>
        <end position="15"/>
    </location>
</feature>
<feature type="compositionally biased region" description="Low complexity" evidence="9">
    <location>
        <begin position="51"/>
        <end position="62"/>
    </location>
</feature>
<feature type="compositionally biased region" description="Low complexity" evidence="9">
    <location>
        <begin position="69"/>
        <end position="80"/>
    </location>
</feature>
<feature type="compositionally biased region" description="Basic residues" evidence="9">
    <location>
        <begin position="108"/>
        <end position="127"/>
    </location>
</feature>
<feature type="compositionally biased region" description="Acidic residues" evidence="9">
    <location>
        <begin position="339"/>
        <end position="349"/>
    </location>
</feature>
<feature type="compositionally biased region" description="Acidic residues" evidence="9">
    <location>
        <begin position="360"/>
        <end position="373"/>
    </location>
</feature>
<feature type="binding site" evidence="4">
    <location>
        <position position="163"/>
    </location>
    <ligand>
        <name>Zn(2+)</name>
        <dbReference type="ChEBI" id="CHEBI:29105"/>
        <label>2</label>
    </ligand>
</feature>
<feature type="binding site" evidence="4">
    <location>
        <position position="166"/>
    </location>
    <ligand>
        <name>Zn(2+)</name>
        <dbReference type="ChEBI" id="CHEBI:29105"/>
        <label>2</label>
    </ligand>
</feature>
<feature type="binding site" evidence="4">
    <location>
        <position position="177"/>
    </location>
    <ligand>
        <name>Zn(2+)</name>
        <dbReference type="ChEBI" id="CHEBI:29105"/>
        <label>1</label>
    </ligand>
</feature>
<feature type="binding site" evidence="4">
    <location>
        <position position="180"/>
    </location>
    <ligand>
        <name>Zn(2+)</name>
        <dbReference type="ChEBI" id="CHEBI:29105"/>
        <label>1</label>
    </ligand>
</feature>
<feature type="binding site" evidence="4">
    <location>
        <position position="185"/>
    </location>
    <ligand>
        <name>Zn(2+)</name>
        <dbReference type="ChEBI" id="CHEBI:29105"/>
        <label>2</label>
    </ligand>
</feature>
<feature type="binding site" evidence="4">
    <location>
        <position position="188"/>
    </location>
    <ligand>
        <name>Zn(2+)</name>
        <dbReference type="ChEBI" id="CHEBI:29105"/>
        <label>2</label>
    </ligand>
</feature>
<feature type="binding site" evidence="4">
    <location>
        <position position="203"/>
    </location>
    <ligand>
        <name>Zn(2+)</name>
        <dbReference type="ChEBI" id="CHEBI:29105"/>
        <label>1</label>
    </ligand>
</feature>
<feature type="binding site" evidence="4">
    <location>
        <position position="206"/>
    </location>
    <ligand>
        <name>Zn(2+)</name>
        <dbReference type="ChEBI" id="CHEBI:29105"/>
        <label>1</label>
    </ligand>
</feature>
<feature type="binding site" evidence="2">
    <location>
        <begin position="468"/>
        <end position="476"/>
    </location>
    <ligand>
        <name>ATP</name>
        <dbReference type="ChEBI" id="CHEBI:30616"/>
    </ligand>
</feature>
<feature type="binding site" evidence="5">
    <location>
        <begin position="468"/>
        <end position="475"/>
    </location>
    <ligand>
        <name>ATP</name>
        <dbReference type="ChEBI" id="CHEBI:30616"/>
    </ligand>
</feature>
<feature type="binding site" evidence="2">
    <location>
        <position position="558"/>
    </location>
    <ligand>
        <name>Mg(2+)</name>
        <dbReference type="ChEBI" id="CHEBI:18420"/>
    </ligand>
</feature>
<feature type="binding site" evidence="2">
    <location>
        <position position="559"/>
    </location>
    <ligand>
        <name>ATP</name>
        <dbReference type="ChEBI" id="CHEBI:30616"/>
    </ligand>
</feature>
<feature type="binding site" evidence="2">
    <location>
        <position position="559"/>
    </location>
    <ligand>
        <name>Mg(2+)</name>
        <dbReference type="ChEBI" id="CHEBI:18420"/>
    </ligand>
</feature>
<feature type="binding site" evidence="2">
    <location>
        <position position="592"/>
    </location>
    <ligand>
        <name>ATP</name>
        <dbReference type="ChEBI" id="CHEBI:30616"/>
    </ligand>
</feature>
<feature type="binding site" evidence="2">
    <location>
        <position position="657"/>
    </location>
    <ligand>
        <name>ATP</name>
        <dbReference type="ChEBI" id="CHEBI:30616"/>
    </ligand>
</feature>
<feature type="sequence conflict" description="In Ref. 1; BAA89785." evidence="14" ref="1">
    <location>
        <begin position="107"/>
        <end position="108"/>
    </location>
</feature>
<feature type="sequence conflict" description="In Ref. 1; BAA89785." evidence="14" ref="1">
    <original>T</original>
    <variation>N</variation>
    <location>
        <position position="431"/>
    </location>
</feature>
<feature type="sequence conflict" description="In Ref. 1; BAA89785." evidence="14" ref="1">
    <original>L</original>
    <variation>I</variation>
    <location>
        <position position="460"/>
    </location>
</feature>
<feature type="sequence conflict" description="In Ref. 1; BAA89785." evidence="14" ref="1">
    <original>P</original>
    <variation>L</variation>
    <location>
        <position position="602"/>
    </location>
</feature>
<feature type="sequence conflict" description="In Ref. 1; BAA89785." evidence="14" ref="1">
    <original>T</original>
    <variation>N</variation>
    <location>
        <position position="761"/>
    </location>
</feature>
<feature type="sequence conflict" description="In Ref. 1; BAA89785." evidence="14" ref="1">
    <original>L</original>
    <variation>F</variation>
    <location>
        <position position="776"/>
    </location>
</feature>
<sequence>MDLSATPSRSKSGLRSSPRKPVAAPAVAQMDLSTPSKPTPRRKPKAPPVAAPMSPVTPSSVRRSSRLLETPTKVTSETPVKPTPTPKRKRAAPSPSPKTPTQSEPKRQRQRQRQRQQPKKPKKRAYYRKVVYDGGEFAAGDDVYVKRRDGAESDAEDPEAEECRVCFRAGAAVMVECDVCLGGFHLRCVRPPLRRVPEGDWACPYCEAERAGKAIERPKPPEGKRIVRTAKEKLLSSDLWAARIESLWREPDGIFWAKVRWYIIPEETAAGRQPHNLRRELYRTNDLADIEMETILRHCYVMSPKEFKDASDQGDDVFYCEYEYDIHWHNFKRLADIDDEPETKEDPGDEPYNAGNDYVSDSDEDSEYDEEEEPTKCSSARTHQSHALAANLRKGRTYGLQKIGIRKIPEHVRCHQKTNLEKAKATLLLATLPKSLPCRDKEMEEISAFVKDAICNDQCLGRCLYIHGVPGTGKTMSVLAVMRRLRSELDSGNLRPYSFIEINGLKLASPENIYKVIYEQLSGHRVGWKKALHYLTEHFSGGTKIGKQANQPIILLIDELDLLLTRNQSVLYNILDWPTRPNSNLVVIGIANTMDLPEKLLPRISSRMGIQRLCFGPYNYRQLQEIITSRLKGIDAFEDQAIEFASRKVAAMSGDARRALEICRRAAEFADYRVKQSGHTSVNRGKNVVCMGDIEAAIQEVFQAPHIQVMKNCPKFGKIILVAMVHELYRSGLGEVMFDKLAATVLSWCHVNRELLPGYDTLLKICCKLGEGKIILCEEGTKHKLQKLQLNYPSDDVTFALKESPDIPWLSKYL</sequence>
<proteinExistence type="evidence at transcript level"/>
<evidence type="ECO:0000250" key="1">
    <source>
        <dbReference type="UniProtKB" id="P54784"/>
    </source>
</evidence>
<evidence type="ECO:0000250" key="2">
    <source>
        <dbReference type="UniProtKB" id="Q13415"/>
    </source>
</evidence>
<evidence type="ECO:0000250" key="3">
    <source>
        <dbReference type="UniProtKB" id="Q710E8"/>
    </source>
</evidence>
<evidence type="ECO:0000250" key="4">
    <source>
        <dbReference type="UniProtKB" id="Q9SU24"/>
    </source>
</evidence>
<evidence type="ECO:0000255" key="5"/>
<evidence type="ECO:0000255" key="6">
    <source>
        <dbReference type="PROSITE-ProRule" id="PRU00146"/>
    </source>
</evidence>
<evidence type="ECO:0000255" key="7">
    <source>
        <dbReference type="PROSITE-ProRule" id="PRU00370"/>
    </source>
</evidence>
<evidence type="ECO:0000255" key="8">
    <source>
        <dbReference type="PROSITE-ProRule" id="PRU00768"/>
    </source>
</evidence>
<evidence type="ECO:0000256" key="9">
    <source>
        <dbReference type="SAM" id="MobiDB-lite"/>
    </source>
</evidence>
<evidence type="ECO:0000269" key="10">
    <source>
    </source>
</evidence>
<evidence type="ECO:0000269" key="11">
    <source>
    </source>
</evidence>
<evidence type="ECO:0000269" key="12">
    <source>
    </source>
</evidence>
<evidence type="ECO:0000303" key="13">
    <source>
    </source>
</evidence>
<evidence type="ECO:0000305" key="14"/>
<evidence type="ECO:0000312" key="15">
    <source>
        <dbReference type="EMBL" id="BAD72454.1"/>
    </source>
</evidence>
<evidence type="ECO:0000312" key="16">
    <source>
        <dbReference type="EMBL" id="BAF18928.1"/>
    </source>
</evidence>
<evidence type="ECO:0000312" key="17">
    <source>
        <dbReference type="EMBL" id="EEE65230.1"/>
    </source>
</evidence>
<organism>
    <name type="scientific">Oryza sativa subsp. japonica</name>
    <name type="common">Rice</name>
    <dbReference type="NCBI Taxonomy" id="39947"/>
    <lineage>
        <taxon>Eukaryota</taxon>
        <taxon>Viridiplantae</taxon>
        <taxon>Streptophyta</taxon>
        <taxon>Embryophyta</taxon>
        <taxon>Tracheophyta</taxon>
        <taxon>Spermatophyta</taxon>
        <taxon>Magnoliopsida</taxon>
        <taxon>Liliopsida</taxon>
        <taxon>Poales</taxon>
        <taxon>Poaceae</taxon>
        <taxon>BOP clade</taxon>
        <taxon>Oryzoideae</taxon>
        <taxon>Oryzeae</taxon>
        <taxon>Oryzinae</taxon>
        <taxon>Oryza</taxon>
        <taxon>Oryza sativa</taxon>
    </lineage>
</organism>
<comment type="function">
    <text evidence="1 3 13">Essential protein (By similarity). Component of the origin recognition complex (ORC) that binds origins of replication. It has a role in both chromosomal replication and mating type transcriptional silencing. Binds to the ARS consensus sequence (ACS) of origins of replication (By similarity). H3K4me3 effector that positively regulates the transcription of a subset of genes (By similarity). Required for cell proliferation (PubMed:10996242).</text>
</comment>
<comment type="subunit">
    <text evidence="3 4">Component of the origin recognition complex (ORC) composed of at least ORC1, ORC2, ORC3, ORC4, ORC5 and ORC6. ORC is regulated in a cell-cycle and development dependent manner. It is sequentially assembled at the exit from anaphase of mitosis and disassembled as cells enter S phase (By similarity). Binds unmodified and methylated histone H3 (By similarity).</text>
</comment>
<comment type="subcellular location">
    <subcellularLocation>
        <location evidence="11">Nucleus</location>
    </subcellularLocation>
</comment>
<comment type="tissue specificity">
    <text evidence="10 11">Expressed strongly in root tips and shoot apical meristem (SAM), and weakly in young leaves. Not detected in mature leaves.</text>
</comment>
<comment type="induction">
    <text evidence="10 11 12">Reduced expression upon sucrose depletion-mediated cell proliferation arrest, and accumulates after sucrose treatment (PubMed:10996242, PubMed:15939553). Induced by gamma irradiation (PubMed:25124817).</text>
</comment>
<comment type="similarity">
    <text evidence="14">Belongs to the ORC1 family.</text>
</comment>
<comment type="sequence caution" evidence="14">
    <conflict type="frameshift">
        <sequence resource="EMBL-CDS" id="BAA89785"/>
    </conflict>
</comment>
<comment type="sequence caution" evidence="14">
    <conflict type="erroneous gene model prediction">
        <sequence resource="EMBL-CDS" id="BAF18928"/>
    </conflict>
</comment>
<reference key="1">
    <citation type="journal article" date="2000" name="Plant Sci.">
        <title>Molecular cloning and characterization of a plant homologue of the origin recognition complex 1 (ORC1).</title>
        <authorList>
            <person name="Kimura S."/>
            <person name="Ishibashi T."/>
            <person name="Hatanaka M."/>
            <person name="Sakakibara Y."/>
            <person name="Hashimoto J."/>
            <person name="Sakaguchi K."/>
        </authorList>
    </citation>
    <scope>NUCLEOTIDE SEQUENCE [MRNA]</scope>
    <scope>FUNCTION</scope>
    <scope>TISSUE SPECIFICITY</scope>
    <scope>INDUCTION BY SUCROSE</scope>
    <source>
        <strain>cv. Nipponbare</strain>
    </source>
</reference>
<reference key="2">
    <citation type="journal article" date="2005" name="Nature">
        <title>The map-based sequence of the rice genome.</title>
        <authorList>
            <consortium name="International rice genome sequencing project (IRGSP)"/>
        </authorList>
    </citation>
    <scope>NUCLEOTIDE SEQUENCE [LARGE SCALE GENOMIC DNA]</scope>
    <source>
        <strain>cv. Nipponbare</strain>
    </source>
</reference>
<reference key="3">
    <citation type="journal article" date="2008" name="Nucleic Acids Res.">
        <title>The rice annotation project database (RAP-DB): 2008 update.</title>
        <authorList>
            <consortium name="The rice annotation project (RAP)"/>
        </authorList>
    </citation>
    <scope>GENOME REANNOTATION</scope>
    <source>
        <strain>cv. Nipponbare</strain>
    </source>
</reference>
<reference key="4">
    <citation type="journal article" date="2013" name="Rice">
        <title>Improvement of the Oryza sativa Nipponbare reference genome using next generation sequence and optical map data.</title>
        <authorList>
            <person name="Kawahara Y."/>
            <person name="de la Bastide M."/>
            <person name="Hamilton J.P."/>
            <person name="Kanamori H."/>
            <person name="McCombie W.R."/>
            <person name="Ouyang S."/>
            <person name="Schwartz D.C."/>
            <person name="Tanaka T."/>
            <person name="Wu J."/>
            <person name="Zhou S."/>
            <person name="Childs K.L."/>
            <person name="Davidson R.M."/>
            <person name="Lin H."/>
            <person name="Quesada-Ocampo L."/>
            <person name="Vaillancourt B."/>
            <person name="Sakai H."/>
            <person name="Lee S.S."/>
            <person name="Kim J."/>
            <person name="Numa H."/>
            <person name="Itoh T."/>
            <person name="Buell C.R."/>
            <person name="Matsumoto T."/>
        </authorList>
    </citation>
    <scope>GENOME REANNOTATION</scope>
    <source>
        <strain>cv. Nipponbare</strain>
    </source>
</reference>
<reference key="5">
    <citation type="journal article" date="2005" name="PLoS Biol.">
        <title>The genomes of Oryza sativa: a history of duplications.</title>
        <authorList>
            <person name="Yu J."/>
            <person name="Wang J."/>
            <person name="Lin W."/>
            <person name="Li S."/>
            <person name="Li H."/>
            <person name="Zhou J."/>
            <person name="Ni P."/>
            <person name="Dong W."/>
            <person name="Hu S."/>
            <person name="Zeng C."/>
            <person name="Zhang J."/>
            <person name="Zhang Y."/>
            <person name="Li R."/>
            <person name="Xu Z."/>
            <person name="Li S."/>
            <person name="Li X."/>
            <person name="Zheng H."/>
            <person name="Cong L."/>
            <person name="Lin L."/>
            <person name="Yin J."/>
            <person name="Geng J."/>
            <person name="Li G."/>
            <person name="Shi J."/>
            <person name="Liu J."/>
            <person name="Lv H."/>
            <person name="Li J."/>
            <person name="Wang J."/>
            <person name="Deng Y."/>
            <person name="Ran L."/>
            <person name="Shi X."/>
            <person name="Wang X."/>
            <person name="Wu Q."/>
            <person name="Li C."/>
            <person name="Ren X."/>
            <person name="Wang J."/>
            <person name="Wang X."/>
            <person name="Li D."/>
            <person name="Liu D."/>
            <person name="Zhang X."/>
            <person name="Ji Z."/>
            <person name="Zhao W."/>
            <person name="Sun Y."/>
            <person name="Zhang Z."/>
            <person name="Bao J."/>
            <person name="Han Y."/>
            <person name="Dong L."/>
            <person name="Ji J."/>
            <person name="Chen P."/>
            <person name="Wu S."/>
            <person name="Liu J."/>
            <person name="Xiao Y."/>
            <person name="Bu D."/>
            <person name="Tan J."/>
            <person name="Yang L."/>
            <person name="Ye C."/>
            <person name="Zhang J."/>
            <person name="Xu J."/>
            <person name="Zhou Y."/>
            <person name="Yu Y."/>
            <person name="Zhang B."/>
            <person name="Zhuang S."/>
            <person name="Wei H."/>
            <person name="Liu B."/>
            <person name="Lei M."/>
            <person name="Yu H."/>
            <person name="Li Y."/>
            <person name="Xu H."/>
            <person name="Wei S."/>
            <person name="He X."/>
            <person name="Fang L."/>
            <person name="Zhang Z."/>
            <person name="Zhang Y."/>
            <person name="Huang X."/>
            <person name="Su Z."/>
            <person name="Tong W."/>
            <person name="Li J."/>
            <person name="Tong Z."/>
            <person name="Li S."/>
            <person name="Ye J."/>
            <person name="Wang L."/>
            <person name="Fang L."/>
            <person name="Lei T."/>
            <person name="Chen C.-S."/>
            <person name="Chen H.-C."/>
            <person name="Xu Z."/>
            <person name="Li H."/>
            <person name="Huang H."/>
            <person name="Zhang F."/>
            <person name="Xu H."/>
            <person name="Li N."/>
            <person name="Zhao C."/>
            <person name="Li S."/>
            <person name="Dong L."/>
            <person name="Huang Y."/>
            <person name="Li L."/>
            <person name="Xi Y."/>
            <person name="Qi Q."/>
            <person name="Li W."/>
            <person name="Zhang B."/>
            <person name="Hu W."/>
            <person name="Zhang Y."/>
            <person name="Tian X."/>
            <person name="Jiao Y."/>
            <person name="Liang X."/>
            <person name="Jin J."/>
            <person name="Gao L."/>
            <person name="Zheng W."/>
            <person name="Hao B."/>
            <person name="Liu S.-M."/>
            <person name="Wang W."/>
            <person name="Yuan L."/>
            <person name="Cao M."/>
            <person name="McDermott J."/>
            <person name="Samudrala R."/>
            <person name="Wang J."/>
            <person name="Wong G.K.-S."/>
            <person name="Yang H."/>
        </authorList>
    </citation>
    <scope>NUCLEOTIDE SEQUENCE [LARGE SCALE GENOMIC DNA]</scope>
    <source>
        <strain>cv. Nipponbare</strain>
    </source>
</reference>
<reference key="6">
    <citation type="journal article" date="2003" name="Science">
        <title>Collection, mapping, and annotation of over 28,000 cDNA clones from japonica rice.</title>
        <authorList>
            <consortium name="The rice full-length cDNA consortium"/>
        </authorList>
    </citation>
    <scope>NUCLEOTIDE SEQUENCE [LARGE SCALE MRNA]</scope>
    <source>
        <strain>cv. Nipponbare</strain>
    </source>
</reference>
<reference key="7">
    <citation type="journal article" date="2005" name="Gene">
        <title>Characterization of the origin recognition complex (ORC) from a higher plant, rice (Oryza sativa L.).</title>
        <authorList>
            <person name="Mori Y."/>
            <person name="Yamamoto T."/>
            <person name="Sakaguchi N."/>
            <person name="Ishibashi T."/>
            <person name="Furukawa T."/>
            <person name="Kadota Y."/>
            <person name="Kuchitsu K."/>
            <person name="Hashimoto J."/>
            <person name="Kimura S."/>
            <person name="Sakaguchi K."/>
        </authorList>
    </citation>
    <scope>SUBCELLULAR LOCATION</scope>
    <scope>TISSUE SPECIFICITY</scope>
    <scope>INDUCTION BY SUCROSE</scope>
    <scope>GENE FAMILY</scope>
    <scope>NOMENCLATURE</scope>
    <source>
        <strain>cv. Nipponbare</strain>
    </source>
</reference>
<reference key="8">
    <citation type="journal article" date="2007" name="Plant Physiol.">
        <title>Genome-wide analysis of the core DNA replication machinery in the higher plants Arabidopsis and rice.</title>
        <authorList>
            <person name="Shultz R.W."/>
            <person name="Tatineni V.M."/>
            <person name="Hanley-Bowdoin L."/>
            <person name="Thompson W.F."/>
        </authorList>
    </citation>
    <scope>REVIEW ON THE CORE DNA REPLICATION MACHINERY</scope>
</reference>
<reference key="9">
    <citation type="journal article" date="2014" name="J. Hered.">
        <title>Unraveling low-level gamma radiation--responsive changes in expression of early and late genes in leaves of rice seedlings at Iitate Village, Fukushima.</title>
        <authorList>
            <person name="Hayashi G."/>
            <person name="Shibato J."/>
            <person name="Imanaka T."/>
            <person name="Cho K."/>
            <person name="Kubo A."/>
            <person name="Kikuchi S."/>
            <person name="Satoh K."/>
            <person name="Kimura S."/>
            <person name="Ozawa S."/>
            <person name="Fukutani S."/>
            <person name="Endo S."/>
            <person name="Ichikawa K."/>
            <person name="Agrawal G.K."/>
            <person name="Shioda S."/>
            <person name="Fukumoto M."/>
            <person name="Rakwal R."/>
        </authorList>
    </citation>
    <scope>INDUCTION BY GAMMA IRRADIATION</scope>
</reference>